<evidence type="ECO:0000250" key="1">
    <source>
        <dbReference type="UniProtKB" id="P43033"/>
    </source>
</evidence>
<evidence type="ECO:0000250" key="2">
    <source>
        <dbReference type="UniProtKB" id="P43034"/>
    </source>
</evidence>
<evidence type="ECO:0000250" key="3">
    <source>
        <dbReference type="UniProtKB" id="P63005"/>
    </source>
</evidence>
<evidence type="ECO:0000250" key="4">
    <source>
        <dbReference type="UniProtKB" id="P68402"/>
    </source>
</evidence>
<evidence type="ECO:0000250" key="5">
    <source>
        <dbReference type="UniProtKB" id="Q15102"/>
    </source>
</evidence>
<evidence type="ECO:0000250" key="6">
    <source>
        <dbReference type="UniProtKB" id="Q29460"/>
    </source>
</evidence>
<evidence type="ECO:0000255" key="7">
    <source>
        <dbReference type="HAMAP-Rule" id="MF_03141"/>
    </source>
</evidence>
<reference key="1">
    <citation type="submission" date="2000-11" db="EMBL/GenBank/DDBJ databases">
        <title>Cloning of porcine PAF-AH Ib-alpha cDNA and expression in endothelial cells.</title>
        <authorList>
            <person name="Nagasaka T."/>
            <person name="Boulday G."/>
            <person name="Coupel S."/>
            <person name="Coulon F."/>
            <person name="Tesson L."/>
            <person name="Heslan J.-M."/>
            <person name="Soulillou J.-P."/>
            <person name="Charreau B."/>
        </authorList>
    </citation>
    <scope>NUCLEOTIDE SEQUENCE [MRNA]</scope>
</reference>
<feature type="chain" id="PRO_0000240413" description="Platelet-activating factor acetylhydrolase IB subunit alpha">
    <location>
        <begin position="1"/>
        <end position="410"/>
    </location>
</feature>
<feature type="domain" description="LisH" evidence="7">
    <location>
        <begin position="7"/>
        <end position="39"/>
    </location>
</feature>
<feature type="repeat" description="WD 1">
    <location>
        <begin position="106"/>
        <end position="147"/>
    </location>
</feature>
<feature type="repeat" description="WD 2">
    <location>
        <begin position="148"/>
        <end position="187"/>
    </location>
</feature>
<feature type="repeat" description="WD 3">
    <location>
        <begin position="190"/>
        <end position="229"/>
    </location>
</feature>
<feature type="repeat" description="WD 4">
    <location>
        <begin position="232"/>
        <end position="271"/>
    </location>
</feature>
<feature type="repeat" description="WD 5">
    <location>
        <begin position="274"/>
        <end position="333"/>
    </location>
</feature>
<feature type="repeat" description="WD 6">
    <location>
        <begin position="336"/>
        <end position="377"/>
    </location>
</feature>
<feature type="repeat" description="WD 7">
    <location>
        <begin position="378"/>
        <end position="410"/>
    </location>
</feature>
<feature type="region of interest" description="Interaction with NDEL1" evidence="7">
    <location>
        <begin position="1"/>
        <end position="102"/>
    </location>
</feature>
<feature type="region of interest" description="Interaction with NDE1" evidence="7">
    <location>
        <begin position="1"/>
        <end position="66"/>
    </location>
</feature>
<feature type="region of interest" description="Required for self-association and interaction with PAFAH1B2 and PAFAH1B3" evidence="7">
    <location>
        <begin position="1"/>
        <end position="38"/>
    </location>
</feature>
<feature type="region of interest" description="Interaction with dynein and dynactin" evidence="7">
    <location>
        <begin position="83"/>
        <end position="410"/>
    </location>
</feature>
<feature type="region of interest" description="Interaction with DCX" evidence="7">
    <location>
        <begin position="367"/>
        <end position="409"/>
    </location>
</feature>
<feature type="region of interest" description="Interaction with NDEL1" evidence="7">
    <location>
        <begin position="388"/>
        <end position="410"/>
    </location>
</feature>
<feature type="coiled-coil region" evidence="7">
    <location>
        <begin position="56"/>
        <end position="82"/>
    </location>
</feature>
<feature type="modified residue" description="N6-acetyllysine" evidence="2">
    <location>
        <position position="53"/>
    </location>
</feature>
<feature type="modified residue" description="Phosphoserine" evidence="2">
    <location>
        <position position="109"/>
    </location>
</feature>
<sequence length="410" mass="46654">MVLSQRQRDELNRAIADYLRSNGYEEAYSVFKKEAELDMNEELDKKYAGLLEKKWTSVIRLQKKVMELESKLNEAKEEFTSGGPLGQKRDPKEWIPRPPEKYALSGHRSPVTRVIFHPVFSVMVSASEDATIKVWDYETGDFERTLKGHTDSVQDISFDHSGKLLASCSADMTIKLWDFQGFECIRTMHGHDHNVSSVAIMPNGDHIVSAARDKTIKMWEVQTGYCVKTFTGHREWVRMVRPNQDGTLIASCSNDQTVRVWVVATKECKAELREHEHVVECISWAPESSYSSISEATGSETKKSGKPGPFLLSGSRDKTIKMWDVSTGMCLMTLVGHDNWVRGVLFHSGGKFILSCADDKTLRVWDYKNKRCMKTLNAHEHFVTSLDFHKTAPYVVTGSVDQTVKVWECR</sequence>
<protein>
    <recommendedName>
        <fullName evidence="2 7">Platelet-activating factor acetylhydrolase IB subunit alpha</fullName>
    </recommendedName>
    <alternativeName>
        <fullName evidence="7">Lissencephaly-1 protein</fullName>
        <shortName evidence="7">LIS-1</shortName>
    </alternativeName>
    <alternativeName>
        <fullName evidence="7">PAF acetylhydrolase 45 kDa subunit</fullName>
        <shortName evidence="7">PAF-AH 45 kDa subunit</shortName>
    </alternativeName>
    <alternativeName>
        <fullName evidence="7">PAF-AH alpha</fullName>
        <shortName evidence="7">PAFAH alpha</shortName>
    </alternativeName>
</protein>
<organism>
    <name type="scientific">Sus scrofa</name>
    <name type="common">Pig</name>
    <dbReference type="NCBI Taxonomy" id="9823"/>
    <lineage>
        <taxon>Eukaryota</taxon>
        <taxon>Metazoa</taxon>
        <taxon>Chordata</taxon>
        <taxon>Craniata</taxon>
        <taxon>Vertebrata</taxon>
        <taxon>Euteleostomi</taxon>
        <taxon>Mammalia</taxon>
        <taxon>Eutheria</taxon>
        <taxon>Laurasiatheria</taxon>
        <taxon>Artiodactyla</taxon>
        <taxon>Suina</taxon>
        <taxon>Suidae</taxon>
        <taxon>Sus</taxon>
    </lineage>
</organism>
<gene>
    <name evidence="2 7" type="primary">PAFAH1B1</name>
    <name evidence="7" type="synonym">LIS1</name>
    <name type="synonym">PAFAHA</name>
</gene>
<keyword id="KW-0007">Acetylation</keyword>
<keyword id="KW-0131">Cell cycle</keyword>
<keyword id="KW-0132">Cell division</keyword>
<keyword id="KW-0175">Coiled coil</keyword>
<keyword id="KW-0963">Cytoplasm</keyword>
<keyword id="KW-0206">Cytoskeleton</keyword>
<keyword id="KW-0217">Developmental protein</keyword>
<keyword id="KW-0221">Differentiation</keyword>
<keyword id="KW-0442">Lipid degradation</keyword>
<keyword id="KW-0443">Lipid metabolism</keyword>
<keyword id="KW-0472">Membrane</keyword>
<keyword id="KW-0493">Microtubule</keyword>
<keyword id="KW-0498">Mitosis</keyword>
<keyword id="KW-0524">Neurogenesis</keyword>
<keyword id="KW-0539">Nucleus</keyword>
<keyword id="KW-0597">Phosphoprotein</keyword>
<keyword id="KW-1185">Reference proteome</keyword>
<keyword id="KW-0677">Repeat</keyword>
<keyword id="KW-0813">Transport</keyword>
<keyword id="KW-0853">WD repeat</keyword>
<name>LIS1_PIG</name>
<accession>Q9GL51</accession>
<comment type="function">
    <text evidence="1 2 3 7">Regulatory subunit (beta subunit) of the cytosolic type I platelet-activating factor (PAF) acetylhydrolase (PAF-AH (I)), an enzyme that catalyzes the hydrolyze of the acetyl group at the sn-2 position of PAF and its analogs and participates in PAF inactivation. Regulates the PAF-AH (I) activity in a catalytic dimer composition-dependent manner (By similarity). Positively regulates the activity of the minus-end directed microtubule motor protein dynein. May enhance dynein-mediated microtubule sliding by targeting dynein to the microtubule plus end. Required for several dynein- and microtubule-dependent processes such as the maintenance of Golgi integrity, the peripheral transport of microtubule fragments and the coupling of the nucleus and centrosome. Required during brain development for the proliferation of neuronal precursors and the migration of newly formed neurons from the ventricular/subventricular zone toward the cortical plate. Neuronal migration involves a process called nucleokinesis, whereby migrating cells extend an anterior process into which the nucleus subsequently translocates. During nucleokinesis dynein at the nuclear surface may translocate the nucleus towards the centrosome by exerting force on centrosomal microtubules. Also required for proper activation of Rho GTPases and actin polymerization at the leading edge of locomoting cerebellar neurons and postmigratory hippocampal neurons in response to calcium influx triggered via NMDA receptors. May also play a role in other forms of cell locomotion including the migration of fibroblasts during wound healing. Required for dynein recruitment to microtubule plus ends and BICD2-bound cargos. May modulate the Reelin pathway through interaction of the PAF-AH (I) catalytic dimer with VLDLR (By similarity).</text>
</comment>
<comment type="subunit">
    <text evidence="1 2 7">Can self-associate. Component of the cytosolic PAF-AH (I) heterotetrameric enzyme, which is composed of PAFAH1B1 (beta), PAFAH1B2 (alpha2) and PAFAH1B3 (alpha1) subunits. The catalytic activity of the enzyme resides in the alpha1 (PAFAH1B3) and alpha2 (PAFAH1B2) subunits, whereas the beta subunit (PAFAH1B1) has regulatory activity. Trimer formation is not essential for the catalytic activity. Interacts with the catalytic dimer of PAF-AH (I) heterotetrameric enzyme: interacts with PAFAH1B2 homodimer (alpha2/alpha2 homodimer), PAFAH1B3 homodimer (alpha1/alpha1 homodimer) and PAFAH1B2-PAFAH1B3 heterodimer (alpha2/alpha1 heterodimer) (By similarity). Interacts with DCX, dynein, dynactin, IQGAP1, KATNB1, NDE1, NDEL1, NUDC and RSN. Interacts with DISC1, and this interaction is enhanced by NDEL1. Interacts with DAB1 when DAB1 is phosphorylated in response to RELN/reelin signaling. Interacts with INTS13. Interacts with DCDC1.</text>
</comment>
<comment type="subcellular location">
    <subcellularLocation>
        <location evidence="7">Cytoplasm</location>
        <location evidence="7">Cytoskeleton</location>
    </subcellularLocation>
    <subcellularLocation>
        <location evidence="7">Cytoplasm</location>
        <location evidence="7">Cytoskeleton</location>
        <location evidence="7">Microtubule organizing center</location>
        <location evidence="7">Centrosome</location>
    </subcellularLocation>
    <subcellularLocation>
        <location evidence="7">Cytoplasm</location>
        <location evidence="7">Cytoskeleton</location>
        <location evidence="7">Spindle</location>
    </subcellularLocation>
    <subcellularLocation>
        <location evidence="7">Nucleus membrane</location>
    </subcellularLocation>
    <text evidence="7">Localizes to the plus end of microtubules and to the centrosome. May localize to the nuclear membrane. Redistributes to axons during neuronal development. Also localizes to the microtubules of the manchette in elongating spermatids and to the meiotic spindle in spermatocytes.</text>
</comment>
<comment type="domain">
    <text evidence="7">Dimerization mediated by the LisH domain may be required to activate dynein.</text>
</comment>
<comment type="miscellaneous">
    <text evidence="2 4 5 6">Originally the subunits of the type I platelet-activating factor (PAF) acetylhydrolase was named alpha (PAFAH1B1), beta (PAFAH1B2) and gamma (PAFAH1B3) (By similarity). Now these subunits have been renamed beta (PAFAH1B1), alpha2 (PAFAH1B2) and alpha1 (PAFAH1B3) respectively (By similarity).</text>
</comment>
<comment type="similarity">
    <text evidence="7">Belongs to the WD repeat LIS1/nudF family.</text>
</comment>
<proteinExistence type="evidence at transcript level"/>
<dbReference type="EMBL" id="AF319658">
    <property type="protein sequence ID" value="AAG33867.1"/>
    <property type="molecule type" value="mRNA"/>
</dbReference>
<dbReference type="RefSeq" id="NP_999415.1">
    <property type="nucleotide sequence ID" value="NM_214250.1"/>
</dbReference>
<dbReference type="SMR" id="Q9GL51"/>
<dbReference type="FunCoup" id="Q9GL51">
    <property type="interactions" value="2335"/>
</dbReference>
<dbReference type="STRING" id="9823.ENSSSCP00000034646"/>
<dbReference type="PaxDb" id="9823-ENSSSCP00000018896"/>
<dbReference type="PeptideAtlas" id="Q9GL51"/>
<dbReference type="GeneID" id="397482"/>
<dbReference type="KEGG" id="ssc:397482"/>
<dbReference type="CTD" id="5048"/>
<dbReference type="eggNOG" id="KOG0295">
    <property type="taxonomic scope" value="Eukaryota"/>
</dbReference>
<dbReference type="InParanoid" id="Q9GL51"/>
<dbReference type="OrthoDB" id="674604at2759"/>
<dbReference type="Proteomes" id="UP000008227">
    <property type="component" value="Unplaced"/>
</dbReference>
<dbReference type="Proteomes" id="UP000314985">
    <property type="component" value="Unplaced"/>
</dbReference>
<dbReference type="Proteomes" id="UP000694570">
    <property type="component" value="Unplaced"/>
</dbReference>
<dbReference type="Proteomes" id="UP000694571">
    <property type="component" value="Unplaced"/>
</dbReference>
<dbReference type="Proteomes" id="UP000694720">
    <property type="component" value="Unplaced"/>
</dbReference>
<dbReference type="Proteomes" id="UP000694722">
    <property type="component" value="Unplaced"/>
</dbReference>
<dbReference type="Proteomes" id="UP000694723">
    <property type="component" value="Unplaced"/>
</dbReference>
<dbReference type="Proteomes" id="UP000694724">
    <property type="component" value="Unplaced"/>
</dbReference>
<dbReference type="Proteomes" id="UP000694725">
    <property type="component" value="Unplaced"/>
</dbReference>
<dbReference type="Proteomes" id="UP000694726">
    <property type="component" value="Unplaced"/>
</dbReference>
<dbReference type="Proteomes" id="UP000694727">
    <property type="component" value="Unplaced"/>
</dbReference>
<dbReference type="Proteomes" id="UP000694728">
    <property type="component" value="Unplaced"/>
</dbReference>
<dbReference type="GO" id="GO:0008247">
    <property type="term" value="C:1-alkyl-2-acetylglycerophosphocholine esterase complex"/>
    <property type="evidence" value="ECO:0000250"/>
    <property type="project" value="UniProtKB"/>
</dbReference>
<dbReference type="GO" id="GO:1904115">
    <property type="term" value="C:axon cytoplasm"/>
    <property type="evidence" value="ECO:0007669"/>
    <property type="project" value="GOC"/>
</dbReference>
<dbReference type="GO" id="GO:0005813">
    <property type="term" value="C:centrosome"/>
    <property type="evidence" value="ECO:0007669"/>
    <property type="project" value="UniProtKB-SubCell"/>
</dbReference>
<dbReference type="GO" id="GO:0005881">
    <property type="term" value="C:cytoplasmic microtubule"/>
    <property type="evidence" value="ECO:0000318"/>
    <property type="project" value="GO_Central"/>
</dbReference>
<dbReference type="GO" id="GO:0000776">
    <property type="term" value="C:kinetochore"/>
    <property type="evidence" value="ECO:0000318"/>
    <property type="project" value="GO_Central"/>
</dbReference>
<dbReference type="GO" id="GO:0005875">
    <property type="term" value="C:microtubule associated complex"/>
    <property type="evidence" value="ECO:0000318"/>
    <property type="project" value="GO_Central"/>
</dbReference>
<dbReference type="GO" id="GO:0043005">
    <property type="term" value="C:neuron projection"/>
    <property type="evidence" value="ECO:0000318"/>
    <property type="project" value="GO_Central"/>
</dbReference>
<dbReference type="GO" id="GO:0043025">
    <property type="term" value="C:neuronal cell body"/>
    <property type="evidence" value="ECO:0000318"/>
    <property type="project" value="GO_Central"/>
</dbReference>
<dbReference type="GO" id="GO:0005635">
    <property type="term" value="C:nuclear envelope"/>
    <property type="evidence" value="ECO:0000318"/>
    <property type="project" value="GO_Central"/>
</dbReference>
<dbReference type="GO" id="GO:0031965">
    <property type="term" value="C:nuclear membrane"/>
    <property type="evidence" value="ECO:0007669"/>
    <property type="project" value="UniProtKB-SubCell"/>
</dbReference>
<dbReference type="GO" id="GO:0005819">
    <property type="term" value="C:spindle"/>
    <property type="evidence" value="ECO:0007669"/>
    <property type="project" value="UniProtKB-SubCell"/>
</dbReference>
<dbReference type="GO" id="GO:0070840">
    <property type="term" value="F:dynein complex binding"/>
    <property type="evidence" value="ECO:0000318"/>
    <property type="project" value="GO_Central"/>
</dbReference>
<dbReference type="GO" id="GO:0051010">
    <property type="term" value="F:microtubule plus-end binding"/>
    <property type="evidence" value="ECO:0000318"/>
    <property type="project" value="GO_Central"/>
</dbReference>
<dbReference type="GO" id="GO:0046982">
    <property type="term" value="F:protein heterodimerization activity"/>
    <property type="evidence" value="ECO:0000250"/>
    <property type="project" value="UniProtKB"/>
</dbReference>
<dbReference type="GO" id="GO:0048854">
    <property type="term" value="P:brain morphogenesis"/>
    <property type="evidence" value="ECO:0000318"/>
    <property type="project" value="GO_Central"/>
</dbReference>
<dbReference type="GO" id="GO:0051301">
    <property type="term" value="P:cell division"/>
    <property type="evidence" value="ECO:0007669"/>
    <property type="project" value="UniProtKB-KW"/>
</dbReference>
<dbReference type="GO" id="GO:0000132">
    <property type="term" value="P:establishment of mitotic spindle orientation"/>
    <property type="evidence" value="ECO:0000318"/>
    <property type="project" value="GO_Central"/>
</dbReference>
<dbReference type="GO" id="GO:0007281">
    <property type="term" value="P:germ cell development"/>
    <property type="evidence" value="ECO:0000318"/>
    <property type="project" value="GO_Central"/>
</dbReference>
<dbReference type="GO" id="GO:0016042">
    <property type="term" value="P:lipid catabolic process"/>
    <property type="evidence" value="ECO:0007669"/>
    <property type="project" value="UniProtKB-KW"/>
</dbReference>
<dbReference type="GO" id="GO:0031023">
    <property type="term" value="P:microtubule organizing center organization"/>
    <property type="evidence" value="ECO:0000318"/>
    <property type="project" value="GO_Central"/>
</dbReference>
<dbReference type="GO" id="GO:0051012">
    <property type="term" value="P:microtubule sliding"/>
    <property type="evidence" value="ECO:0007669"/>
    <property type="project" value="UniProtKB-UniRule"/>
</dbReference>
<dbReference type="GO" id="GO:0007097">
    <property type="term" value="P:nuclear migration"/>
    <property type="evidence" value="ECO:0000318"/>
    <property type="project" value="GO_Central"/>
</dbReference>
<dbReference type="GO" id="GO:0038026">
    <property type="term" value="P:reelin-mediated signaling pathway"/>
    <property type="evidence" value="ECO:0000250"/>
    <property type="project" value="UniProtKB"/>
</dbReference>
<dbReference type="GO" id="GO:0008090">
    <property type="term" value="P:retrograde axonal transport"/>
    <property type="evidence" value="ECO:0000318"/>
    <property type="project" value="GO_Central"/>
</dbReference>
<dbReference type="GO" id="GO:0047496">
    <property type="term" value="P:vesicle transport along microtubule"/>
    <property type="evidence" value="ECO:0000318"/>
    <property type="project" value="GO_Central"/>
</dbReference>
<dbReference type="CDD" id="cd00200">
    <property type="entry name" value="WD40"/>
    <property type="match status" value="1"/>
</dbReference>
<dbReference type="FunFam" id="2.130.10.10:FF:000038">
    <property type="entry name" value="Lissencephaly-1 homolog B"/>
    <property type="match status" value="1"/>
</dbReference>
<dbReference type="FunFam" id="1.20.960.30:FF:000002">
    <property type="entry name" value="Platelet-activating factor acetylhydrolase ib"/>
    <property type="match status" value="1"/>
</dbReference>
<dbReference type="Gene3D" id="1.20.960.30">
    <property type="match status" value="1"/>
</dbReference>
<dbReference type="Gene3D" id="2.130.10.10">
    <property type="entry name" value="YVTN repeat-like/Quinoprotein amine dehydrogenase"/>
    <property type="match status" value="1"/>
</dbReference>
<dbReference type="HAMAP" id="MF_03141">
    <property type="entry name" value="lis1"/>
    <property type="match status" value="1"/>
</dbReference>
<dbReference type="InterPro" id="IPR017252">
    <property type="entry name" value="Dynein_regulator_LIS1"/>
</dbReference>
<dbReference type="InterPro" id="IPR020472">
    <property type="entry name" value="G-protein_beta_WD-40_rep"/>
</dbReference>
<dbReference type="InterPro" id="IPR037190">
    <property type="entry name" value="LIS1_N"/>
</dbReference>
<dbReference type="InterPro" id="IPR006594">
    <property type="entry name" value="LisH"/>
</dbReference>
<dbReference type="InterPro" id="IPR056795">
    <property type="entry name" value="PAC1-like_LisH-like_dom"/>
</dbReference>
<dbReference type="InterPro" id="IPR015943">
    <property type="entry name" value="WD40/YVTN_repeat-like_dom_sf"/>
</dbReference>
<dbReference type="InterPro" id="IPR019775">
    <property type="entry name" value="WD40_repeat_CS"/>
</dbReference>
<dbReference type="InterPro" id="IPR036322">
    <property type="entry name" value="WD40_repeat_dom_sf"/>
</dbReference>
<dbReference type="InterPro" id="IPR001680">
    <property type="entry name" value="WD40_rpt"/>
</dbReference>
<dbReference type="InterPro" id="IPR050349">
    <property type="entry name" value="WD_LIS1/nudF_dynein_reg"/>
</dbReference>
<dbReference type="PANTHER" id="PTHR44129">
    <property type="entry name" value="WD REPEAT-CONTAINING PROTEIN POP1"/>
    <property type="match status" value="1"/>
</dbReference>
<dbReference type="Pfam" id="PF24951">
    <property type="entry name" value="LisH_PAC1"/>
    <property type="match status" value="1"/>
</dbReference>
<dbReference type="Pfam" id="PF00400">
    <property type="entry name" value="WD40"/>
    <property type="match status" value="7"/>
</dbReference>
<dbReference type="PIRSF" id="PIRSF037647">
    <property type="entry name" value="Dynein_regulator_Lis1"/>
    <property type="match status" value="1"/>
</dbReference>
<dbReference type="PRINTS" id="PR00320">
    <property type="entry name" value="GPROTEINBRPT"/>
</dbReference>
<dbReference type="SMART" id="SM00667">
    <property type="entry name" value="LisH"/>
    <property type="match status" value="1"/>
</dbReference>
<dbReference type="SMART" id="SM00320">
    <property type="entry name" value="WD40"/>
    <property type="match status" value="7"/>
</dbReference>
<dbReference type="SUPFAM" id="SSF109925">
    <property type="entry name" value="Lissencephaly-1 protein (Lis-1, PAF-AH alpha) N-terminal domain"/>
    <property type="match status" value="1"/>
</dbReference>
<dbReference type="SUPFAM" id="SSF50978">
    <property type="entry name" value="WD40 repeat-like"/>
    <property type="match status" value="1"/>
</dbReference>
<dbReference type="PROSITE" id="PS50896">
    <property type="entry name" value="LISH"/>
    <property type="match status" value="1"/>
</dbReference>
<dbReference type="PROSITE" id="PS00678">
    <property type="entry name" value="WD_REPEATS_1"/>
    <property type="match status" value="4"/>
</dbReference>
<dbReference type="PROSITE" id="PS50082">
    <property type="entry name" value="WD_REPEATS_2"/>
    <property type="match status" value="7"/>
</dbReference>
<dbReference type="PROSITE" id="PS50294">
    <property type="entry name" value="WD_REPEATS_REGION"/>
    <property type="match status" value="1"/>
</dbReference>